<sequence length="309" mass="33937">MKRKIIVGSRRSKLALTQSNWVINKLKENYPEFDFEIKEIVTKGDRILDVTLSKVGGKGLFVSEVEQALSDEAIDFAVHSMKDVPSSLKEGLIIGAIPKRESPLDCFVFNQVNSLDELPQGSVIGTSSLRRAAQLLKHRPDFVIKPIRGNIDTRLQKLHAENFDAIILAKAGLARMGWLENTTLKLEDIPPEVCLPAVGQGALAIECRESDQQIRDMLTSIHHEETGICVEAERVFLKKLNGGCEIPIAGFATRANEFVQFKGLVGNADGSIILESEQVGANPSEIGNKVAEDLLSEGADTIIKELRNV</sequence>
<comment type="function">
    <text evidence="1">Tetrapolymerization of the monopyrrole PBG into the hydroxymethylbilane pre-uroporphyrinogen in several discrete steps.</text>
</comment>
<comment type="catalytic activity">
    <reaction evidence="1">
        <text>4 porphobilinogen + H2O = hydroxymethylbilane + 4 NH4(+)</text>
        <dbReference type="Rhea" id="RHEA:13185"/>
        <dbReference type="ChEBI" id="CHEBI:15377"/>
        <dbReference type="ChEBI" id="CHEBI:28938"/>
        <dbReference type="ChEBI" id="CHEBI:57845"/>
        <dbReference type="ChEBI" id="CHEBI:58126"/>
        <dbReference type="EC" id="2.5.1.61"/>
    </reaction>
</comment>
<comment type="cofactor">
    <cofactor evidence="1">
        <name>dipyrromethane</name>
        <dbReference type="ChEBI" id="CHEBI:60342"/>
    </cofactor>
    <text evidence="1">Binds 1 dipyrromethane group covalently.</text>
</comment>
<comment type="pathway">
    <text evidence="1">Porphyrin-containing compound metabolism; protoporphyrin-IX biosynthesis; coproporphyrinogen-III from 5-aminolevulinate: step 2/4.</text>
</comment>
<comment type="subunit">
    <text evidence="1">Monomer.</text>
</comment>
<comment type="miscellaneous">
    <text evidence="1">The porphobilinogen subunits are added to the dipyrromethane group.</text>
</comment>
<comment type="similarity">
    <text evidence="1">Belongs to the HMBS family.</text>
</comment>
<name>HEM3_LISMO</name>
<evidence type="ECO:0000255" key="1">
    <source>
        <dbReference type="HAMAP-Rule" id="MF_00260"/>
    </source>
</evidence>
<accession>Q8Y6X5</accession>
<dbReference type="EC" id="2.5.1.61" evidence="1"/>
<dbReference type="EMBL" id="AL591979">
    <property type="protein sequence ID" value="CAC99634.1"/>
    <property type="molecule type" value="Genomic_DNA"/>
</dbReference>
<dbReference type="PIR" id="AD1269">
    <property type="entry name" value="AD1269"/>
</dbReference>
<dbReference type="RefSeq" id="NP_465081.1">
    <property type="nucleotide sequence ID" value="NC_003210.1"/>
</dbReference>
<dbReference type="RefSeq" id="WP_003723240.1">
    <property type="nucleotide sequence ID" value="NZ_CP149495.1"/>
</dbReference>
<dbReference type="SMR" id="Q8Y6X5"/>
<dbReference type="STRING" id="169963.gene:17594213"/>
<dbReference type="PaxDb" id="169963-lmo1556"/>
<dbReference type="EnsemblBacteria" id="CAC99634">
    <property type="protein sequence ID" value="CAC99634"/>
    <property type="gene ID" value="CAC99634"/>
</dbReference>
<dbReference type="GeneID" id="986927"/>
<dbReference type="KEGG" id="lmo:lmo1556"/>
<dbReference type="PATRIC" id="fig|169963.11.peg.1597"/>
<dbReference type="eggNOG" id="COG0181">
    <property type="taxonomic scope" value="Bacteria"/>
</dbReference>
<dbReference type="HOGENOM" id="CLU_019704_0_2_9"/>
<dbReference type="OrthoDB" id="9810298at2"/>
<dbReference type="PhylomeDB" id="Q8Y6X5"/>
<dbReference type="BioCyc" id="LMON169963:LMO1556-MONOMER"/>
<dbReference type="UniPathway" id="UPA00251">
    <property type="reaction ID" value="UER00319"/>
</dbReference>
<dbReference type="Proteomes" id="UP000000817">
    <property type="component" value="Chromosome"/>
</dbReference>
<dbReference type="GO" id="GO:0005737">
    <property type="term" value="C:cytoplasm"/>
    <property type="evidence" value="ECO:0000318"/>
    <property type="project" value="GO_Central"/>
</dbReference>
<dbReference type="GO" id="GO:0004418">
    <property type="term" value="F:hydroxymethylbilane synthase activity"/>
    <property type="evidence" value="ECO:0000318"/>
    <property type="project" value="GO_Central"/>
</dbReference>
<dbReference type="GO" id="GO:0006783">
    <property type="term" value="P:heme biosynthetic process"/>
    <property type="evidence" value="ECO:0000318"/>
    <property type="project" value="GO_Central"/>
</dbReference>
<dbReference type="GO" id="GO:0006782">
    <property type="term" value="P:protoporphyrinogen IX biosynthetic process"/>
    <property type="evidence" value="ECO:0007669"/>
    <property type="project" value="UniProtKB-UniRule"/>
</dbReference>
<dbReference type="CDD" id="cd13646">
    <property type="entry name" value="PBP2_EcHMBS_like"/>
    <property type="match status" value="1"/>
</dbReference>
<dbReference type="FunFam" id="3.30.160.40:FF:000001">
    <property type="entry name" value="Porphobilinogen deaminase"/>
    <property type="match status" value="1"/>
</dbReference>
<dbReference type="FunFam" id="3.40.190.10:FF:000004">
    <property type="entry name" value="Porphobilinogen deaminase"/>
    <property type="match status" value="1"/>
</dbReference>
<dbReference type="FunFam" id="3.40.190.10:FF:000005">
    <property type="entry name" value="Porphobilinogen deaminase"/>
    <property type="match status" value="1"/>
</dbReference>
<dbReference type="Gene3D" id="3.40.190.10">
    <property type="entry name" value="Periplasmic binding protein-like II"/>
    <property type="match status" value="2"/>
</dbReference>
<dbReference type="Gene3D" id="3.30.160.40">
    <property type="entry name" value="Porphobilinogen deaminase, C-terminal domain"/>
    <property type="match status" value="1"/>
</dbReference>
<dbReference type="HAMAP" id="MF_00260">
    <property type="entry name" value="Porphobil_deam"/>
    <property type="match status" value="1"/>
</dbReference>
<dbReference type="InterPro" id="IPR000860">
    <property type="entry name" value="HemC"/>
</dbReference>
<dbReference type="InterPro" id="IPR022419">
    <property type="entry name" value="Porphobilin_deaminase_cofac_BS"/>
</dbReference>
<dbReference type="InterPro" id="IPR022417">
    <property type="entry name" value="Porphobilin_deaminase_N"/>
</dbReference>
<dbReference type="InterPro" id="IPR022418">
    <property type="entry name" value="Porphobilinogen_deaminase_C"/>
</dbReference>
<dbReference type="InterPro" id="IPR036803">
    <property type="entry name" value="Porphobilinogen_deaminase_C_sf"/>
</dbReference>
<dbReference type="NCBIfam" id="TIGR00212">
    <property type="entry name" value="hemC"/>
    <property type="match status" value="1"/>
</dbReference>
<dbReference type="PANTHER" id="PTHR11557">
    <property type="entry name" value="PORPHOBILINOGEN DEAMINASE"/>
    <property type="match status" value="1"/>
</dbReference>
<dbReference type="PANTHER" id="PTHR11557:SF0">
    <property type="entry name" value="PORPHOBILINOGEN DEAMINASE"/>
    <property type="match status" value="1"/>
</dbReference>
<dbReference type="Pfam" id="PF01379">
    <property type="entry name" value="Porphobil_deam"/>
    <property type="match status" value="1"/>
</dbReference>
<dbReference type="Pfam" id="PF03900">
    <property type="entry name" value="Porphobil_deamC"/>
    <property type="match status" value="1"/>
</dbReference>
<dbReference type="PIRSF" id="PIRSF001438">
    <property type="entry name" value="4pyrrol_synth_OHMeBilane_synth"/>
    <property type="match status" value="1"/>
</dbReference>
<dbReference type="PRINTS" id="PR00151">
    <property type="entry name" value="PORPHBDMNASE"/>
</dbReference>
<dbReference type="SUPFAM" id="SSF53850">
    <property type="entry name" value="Periplasmic binding protein-like II"/>
    <property type="match status" value="1"/>
</dbReference>
<dbReference type="SUPFAM" id="SSF54782">
    <property type="entry name" value="Porphobilinogen deaminase (hydroxymethylbilane synthase), C-terminal domain"/>
    <property type="match status" value="1"/>
</dbReference>
<dbReference type="PROSITE" id="PS00533">
    <property type="entry name" value="PORPHOBILINOGEN_DEAM"/>
    <property type="match status" value="1"/>
</dbReference>
<gene>
    <name evidence="1" type="primary">hemC</name>
    <name type="ordered locus">lmo1556</name>
</gene>
<protein>
    <recommendedName>
        <fullName evidence="1">Porphobilinogen deaminase</fullName>
        <shortName evidence="1">PBG</shortName>
        <ecNumber evidence="1">2.5.1.61</ecNumber>
    </recommendedName>
    <alternativeName>
        <fullName evidence="1">Hydroxymethylbilane synthase</fullName>
        <shortName evidence="1">HMBS</shortName>
    </alternativeName>
    <alternativeName>
        <fullName evidence="1">Pre-uroporphyrinogen synthase</fullName>
    </alternativeName>
</protein>
<proteinExistence type="inferred from homology"/>
<reference key="1">
    <citation type="journal article" date="2001" name="Science">
        <title>Comparative genomics of Listeria species.</title>
        <authorList>
            <person name="Glaser P."/>
            <person name="Frangeul L."/>
            <person name="Buchrieser C."/>
            <person name="Rusniok C."/>
            <person name="Amend A."/>
            <person name="Baquero F."/>
            <person name="Berche P."/>
            <person name="Bloecker H."/>
            <person name="Brandt P."/>
            <person name="Chakraborty T."/>
            <person name="Charbit A."/>
            <person name="Chetouani F."/>
            <person name="Couve E."/>
            <person name="de Daruvar A."/>
            <person name="Dehoux P."/>
            <person name="Domann E."/>
            <person name="Dominguez-Bernal G."/>
            <person name="Duchaud E."/>
            <person name="Durant L."/>
            <person name="Dussurget O."/>
            <person name="Entian K.-D."/>
            <person name="Fsihi H."/>
            <person name="Garcia-del Portillo F."/>
            <person name="Garrido P."/>
            <person name="Gautier L."/>
            <person name="Goebel W."/>
            <person name="Gomez-Lopez N."/>
            <person name="Hain T."/>
            <person name="Hauf J."/>
            <person name="Jackson D."/>
            <person name="Jones L.-M."/>
            <person name="Kaerst U."/>
            <person name="Kreft J."/>
            <person name="Kuhn M."/>
            <person name="Kunst F."/>
            <person name="Kurapkat G."/>
            <person name="Madueno E."/>
            <person name="Maitournam A."/>
            <person name="Mata Vicente J."/>
            <person name="Ng E."/>
            <person name="Nedjari H."/>
            <person name="Nordsiek G."/>
            <person name="Novella S."/>
            <person name="de Pablos B."/>
            <person name="Perez-Diaz J.-C."/>
            <person name="Purcell R."/>
            <person name="Remmel B."/>
            <person name="Rose M."/>
            <person name="Schlueter T."/>
            <person name="Simoes N."/>
            <person name="Tierrez A."/>
            <person name="Vazquez-Boland J.-A."/>
            <person name="Voss H."/>
            <person name="Wehland J."/>
            <person name="Cossart P."/>
        </authorList>
    </citation>
    <scope>NUCLEOTIDE SEQUENCE [LARGE SCALE GENOMIC DNA]</scope>
    <source>
        <strain>ATCC BAA-679 / EGD-e</strain>
    </source>
</reference>
<feature type="chain" id="PRO_0000142954" description="Porphobilinogen deaminase">
    <location>
        <begin position="1"/>
        <end position="309"/>
    </location>
</feature>
<feature type="modified residue" description="S-(dipyrrolylmethanemethyl)cysteine" evidence="1">
    <location>
        <position position="244"/>
    </location>
</feature>
<keyword id="KW-0627">Porphyrin biosynthesis</keyword>
<keyword id="KW-1185">Reference proteome</keyword>
<keyword id="KW-0808">Transferase</keyword>
<organism>
    <name type="scientific">Listeria monocytogenes serovar 1/2a (strain ATCC BAA-679 / EGD-e)</name>
    <dbReference type="NCBI Taxonomy" id="169963"/>
    <lineage>
        <taxon>Bacteria</taxon>
        <taxon>Bacillati</taxon>
        <taxon>Bacillota</taxon>
        <taxon>Bacilli</taxon>
        <taxon>Bacillales</taxon>
        <taxon>Listeriaceae</taxon>
        <taxon>Listeria</taxon>
    </lineage>
</organism>